<reference evidence="6 8" key="1">
    <citation type="journal article" date="2003" name="Mol. Cell. Neurosci.">
        <title>Adaptor protein complex-4 (AP-4) is expressed in the central nervous system neurons and interacts with glutamate receptor delta2.</title>
        <authorList>
            <person name="Yap C.C."/>
            <person name="Murate M."/>
            <person name="Kishigami S."/>
            <person name="Muto Y."/>
            <person name="Kishida H."/>
            <person name="Hashikawa T."/>
            <person name="Yano R."/>
        </authorList>
    </citation>
    <scope>NUCLEOTIDE SEQUENCE [MRNA]</scope>
    <scope>FUNCTION</scope>
    <scope>INTERACTION WITH GRID2</scope>
    <scope>SUBCELLULAR LOCATION</scope>
    <scope>TISSUE SPECIFICITY</scope>
    <source>
        <strain evidence="1 6">Sprague-Dawley</strain>
        <tissue evidence="5">Brain</tissue>
    </source>
</reference>
<proteinExistence type="evidence at protein level"/>
<sequence>MISQFFILSSKGDPLIYKDFRGDSGGRDVAELFYRKLTGLPGGESPVVMYHDDRHFIHIRHSGLYLVATTSENVSPFSLLELLSRLATLLGDYCGSLNEGTISRNVALVYELLDEVLDYGYVQTTSTDMLRNFIQTEAAVSKPFSLFDLSSVGLFGAETQQNRVAPSSAASRPVLSSRSDQSQKNEVFLDVVERLSVLIASNGSLLKVDVQGEIRLKSFLPSSSEICIGLTEEFCVGKSELRGYGPGIRVDEVSFHSSVNLDEFESHRILHLQPPQGELTVMRYQLSDDLPSPLPFRLFPSVQWDQGSGRLQVYLKLRCDLPPKSQALNIHLHLPLPRGVVSLSQELSSPDQKAELGEGALHWDLPRVQGGSQLSGLFQMDVPGLQGPPSRGPSPSAPPLGLGPASLSFELPRHTCSGLQVRFLRLSFSACGNANPHKWVRHLSHSNAYVIRI</sequence>
<protein>
    <recommendedName>
        <fullName evidence="6">AP-4 complex subunit mu-1</fullName>
    </recommendedName>
    <alternativeName>
        <fullName>AP-4 adaptor complex mu subunit</fullName>
    </alternativeName>
    <alternativeName>
        <fullName>Adaptor-related protein complex 4 subunit mu-1</fullName>
    </alternativeName>
    <alternativeName>
        <fullName>Mu subunit of AP-4</fullName>
    </alternativeName>
    <alternativeName>
        <fullName>Mu-adaptin-related protein 2</fullName>
        <shortName>mu-ARP2</shortName>
    </alternativeName>
    <alternativeName>
        <fullName>Mu4-adaptin</fullName>
        <shortName>mu4</shortName>
    </alternativeName>
</protein>
<accession>Q2PWT8</accession>
<comment type="function">
    <text evidence="1 5">Component of the adaptor protein complex 4 (AP-4). Adaptor protein complexes are vesicle coat components involved both in vesicle formation and cargo selection. They control the vesicular transport of proteins in different trafficking pathways. AP-4 forms a non clathrin-associated coat on vesicles departing the trans-Golgi network (TGN) and may be involved in the targeting of proteins from the trans-Golgi network (TGN) to the endosomal-lysosomal system. It is also involved in protein sorting to the basolateral membrane in epithelial cells and the proper asymmetric localization of somatodendritic proteins in neurons. Within AP-4, the mu-type subunit AP4M1 is directly involved in the recognition and binding of tyrosine-based sorting signals found in the cytoplasmic part of cargos (By similarity). The adaptor protein complex 4 (AP-4) may also recognize other types of sorting signal (PubMed:14572453).</text>
</comment>
<comment type="subunit">
    <text evidence="1 5">Adaptor protein complex 4 (AP-4) is a heterotetramer composed of two large adaptins (epsilon-type subunit AP4E1 and beta-type subunit AP4B1), a medium adaptin (mu-type subunit AP4M1) and a small adaptin (sigma-type AP4S1). Interacts with tyrosine-based sorting signals on the cytoplasmic tail of cargo proteins such as APP, ATG9A, LAMP2 and NAGPA (By similarity). Interacts with the C-terminal domain of GRID2 (PubMed:14572453). Interacts with GRIA1 and GRIA2; the interaction is indirect via CACNG3. Interacts with CACNG3; CACNG3 associates GRIA1 and GRIA2 with the adaptor protein complex 4 (AP-4) to target them to the somatodendritic compartment of neurons (By similarity). Interacts with HOOK1 and HOOK2; the interactions are direct, mediate the interaction between FTS-Hook-FHIP (FHF) complex and AP-4 and the perinuclear distribution of AP-4 (By similarity).</text>
</comment>
<comment type="subcellular location">
    <subcellularLocation>
        <location evidence="7">Golgi apparatus</location>
        <location evidence="7">trans-Golgi network membrane</location>
        <topology evidence="7">Peripheral membrane protein</topology>
    </subcellularLocation>
    <subcellularLocation>
        <location evidence="1">Early endosome</location>
    </subcellularLocation>
    <text evidence="5">Found in soma and dendritic shafts of neuronal cells.</text>
</comment>
<comment type="tissue specificity">
    <text evidence="5">High levels in the olfactory bulb, the cerebral cortex, the granule and Purkinje cell layers of the cerebellar cortex and the CA3 region of the hippocampus. Low levels found in molecular layer of cerebellum.</text>
</comment>
<comment type="similarity">
    <text evidence="2">Belongs to the adaptor complexes medium subunit family.</text>
</comment>
<feature type="chain" id="PRO_0000229750" description="AP-4 complex subunit mu-1" evidence="6">
    <location>
        <begin position="1"/>
        <end position="453"/>
    </location>
</feature>
<feature type="domain" description="MHD" evidence="3">
    <location>
        <begin position="184"/>
        <end position="452"/>
    </location>
</feature>
<feature type="region of interest" description="Disordered" evidence="4">
    <location>
        <begin position="383"/>
        <end position="403"/>
    </location>
</feature>
<gene>
    <name evidence="9" type="primary">Ap4m1</name>
</gene>
<evidence type="ECO:0000250" key="1">
    <source>
        <dbReference type="UniProtKB" id="O00189"/>
    </source>
</evidence>
<evidence type="ECO:0000255" key="2"/>
<evidence type="ECO:0000255" key="3">
    <source>
        <dbReference type="PROSITE-ProRule" id="PRU00404"/>
    </source>
</evidence>
<evidence type="ECO:0000256" key="4">
    <source>
        <dbReference type="SAM" id="MobiDB-lite"/>
    </source>
</evidence>
<evidence type="ECO:0000269" key="5">
    <source>
    </source>
</evidence>
<evidence type="ECO:0000305" key="6"/>
<evidence type="ECO:0000305" key="7">
    <source>
    </source>
</evidence>
<evidence type="ECO:0000312" key="8">
    <source>
        <dbReference type="EMBL" id="ABC02084.1"/>
    </source>
</evidence>
<evidence type="ECO:0000312" key="9">
    <source>
        <dbReference type="RGD" id="1310233"/>
    </source>
</evidence>
<name>AP4M1_RAT</name>
<keyword id="KW-0967">Endosome</keyword>
<keyword id="KW-0333">Golgi apparatus</keyword>
<keyword id="KW-0472">Membrane</keyword>
<keyword id="KW-0653">Protein transport</keyword>
<keyword id="KW-1185">Reference proteome</keyword>
<keyword id="KW-0813">Transport</keyword>
<dbReference type="EMBL" id="DQ298439">
    <property type="protein sequence ID" value="ABC02084.1"/>
    <property type="molecule type" value="mRNA"/>
</dbReference>
<dbReference type="RefSeq" id="NP_001033066.1">
    <property type="nucleotide sequence ID" value="NM_001037977.3"/>
</dbReference>
<dbReference type="EMDB" id="EMD-14525"/>
<dbReference type="EMDB" id="EMD-14526"/>
<dbReference type="SMR" id="Q2PWT8"/>
<dbReference type="FunCoup" id="Q2PWT8">
    <property type="interactions" value="2740"/>
</dbReference>
<dbReference type="STRING" id="10116.ENSRNOP00000001827"/>
<dbReference type="PhosphoSitePlus" id="Q2PWT8"/>
<dbReference type="PaxDb" id="10116-ENSRNOP00000001827"/>
<dbReference type="Ensembl" id="ENSRNOT00000001827.5">
    <property type="protein sequence ID" value="ENSRNOP00000001827.2"/>
    <property type="gene ID" value="ENSRNOG00000001353.5"/>
</dbReference>
<dbReference type="GeneID" id="304344"/>
<dbReference type="KEGG" id="rno:304344"/>
<dbReference type="UCSC" id="RGD:1310233">
    <property type="organism name" value="rat"/>
</dbReference>
<dbReference type="AGR" id="RGD:1310233"/>
<dbReference type="CTD" id="9179"/>
<dbReference type="RGD" id="1310233">
    <property type="gene designation" value="Ap4m1"/>
</dbReference>
<dbReference type="eggNOG" id="KOG0937">
    <property type="taxonomic scope" value="Eukaryota"/>
</dbReference>
<dbReference type="GeneTree" id="ENSGT00940000159929"/>
<dbReference type="HOGENOM" id="CLU_026996_5_0_1"/>
<dbReference type="InParanoid" id="Q2PWT8"/>
<dbReference type="OMA" id="DYGYIQN"/>
<dbReference type="OrthoDB" id="10259133at2759"/>
<dbReference type="PhylomeDB" id="Q2PWT8"/>
<dbReference type="TreeFam" id="TF329745"/>
<dbReference type="Reactome" id="R-RNO-432720">
    <property type="pathway name" value="Lysosome Vesicle Biogenesis"/>
</dbReference>
<dbReference type="PRO" id="PR:Q2PWT8"/>
<dbReference type="Proteomes" id="UP000002494">
    <property type="component" value="Chromosome 12"/>
</dbReference>
<dbReference type="Bgee" id="ENSRNOG00000001353">
    <property type="expression patterns" value="Expressed in stomach and 19 other cell types or tissues"/>
</dbReference>
<dbReference type="GO" id="GO:0030124">
    <property type="term" value="C:AP-4 adaptor complex"/>
    <property type="evidence" value="ECO:0000250"/>
    <property type="project" value="UniProtKB"/>
</dbReference>
<dbReference type="GO" id="GO:0030131">
    <property type="term" value="C:clathrin adaptor complex"/>
    <property type="evidence" value="ECO:0007669"/>
    <property type="project" value="InterPro"/>
</dbReference>
<dbReference type="GO" id="GO:0031410">
    <property type="term" value="C:cytoplasmic vesicle"/>
    <property type="evidence" value="ECO:0000318"/>
    <property type="project" value="GO_Central"/>
</dbReference>
<dbReference type="GO" id="GO:0005829">
    <property type="term" value="C:cytosol"/>
    <property type="evidence" value="ECO:0007669"/>
    <property type="project" value="GOC"/>
</dbReference>
<dbReference type="GO" id="GO:0005769">
    <property type="term" value="C:early endosome"/>
    <property type="evidence" value="ECO:0000250"/>
    <property type="project" value="UniProtKB"/>
</dbReference>
<dbReference type="GO" id="GO:0005802">
    <property type="term" value="C:trans-Golgi network"/>
    <property type="evidence" value="ECO:0000250"/>
    <property type="project" value="UniProtKB"/>
</dbReference>
<dbReference type="GO" id="GO:0019904">
    <property type="term" value="F:protein domain specific binding"/>
    <property type="evidence" value="ECO:0000266"/>
    <property type="project" value="RGD"/>
</dbReference>
<dbReference type="GO" id="GO:0000045">
    <property type="term" value="P:autophagosome assembly"/>
    <property type="evidence" value="ECO:0000250"/>
    <property type="project" value="UniProtKB"/>
</dbReference>
<dbReference type="GO" id="GO:0006895">
    <property type="term" value="P:Golgi to endosome transport"/>
    <property type="evidence" value="ECO:0000250"/>
    <property type="project" value="UniProtKB"/>
</dbReference>
<dbReference type="GO" id="GO:0090160">
    <property type="term" value="P:Golgi to lysosome transport"/>
    <property type="evidence" value="ECO:0000250"/>
    <property type="project" value="UniProtKB"/>
</dbReference>
<dbReference type="GO" id="GO:0006886">
    <property type="term" value="P:intracellular protein transport"/>
    <property type="evidence" value="ECO:0000250"/>
    <property type="project" value="UniProtKB"/>
</dbReference>
<dbReference type="GO" id="GO:0008104">
    <property type="term" value="P:protein localization"/>
    <property type="evidence" value="ECO:0000250"/>
    <property type="project" value="UniProtKB"/>
</dbReference>
<dbReference type="GO" id="GO:1903361">
    <property type="term" value="P:protein localization to basolateral plasma membrane"/>
    <property type="evidence" value="ECO:0000250"/>
    <property type="project" value="UniProtKB"/>
</dbReference>
<dbReference type="GO" id="GO:0006605">
    <property type="term" value="P:protein targeting"/>
    <property type="evidence" value="ECO:0000250"/>
    <property type="project" value="UniProtKB"/>
</dbReference>
<dbReference type="GO" id="GO:0006622">
    <property type="term" value="P:protein targeting to lysosome"/>
    <property type="evidence" value="ECO:0000266"/>
    <property type="project" value="RGD"/>
</dbReference>
<dbReference type="CDD" id="cd09253">
    <property type="entry name" value="AP-4_Mu4_Cterm"/>
    <property type="match status" value="1"/>
</dbReference>
<dbReference type="CDD" id="cd14838">
    <property type="entry name" value="AP4_Mu_N"/>
    <property type="match status" value="1"/>
</dbReference>
<dbReference type="FunFam" id="2.60.40.1170:FF:000021">
    <property type="entry name" value="AP-4 complex subunit mu-1 isoform X1"/>
    <property type="match status" value="1"/>
</dbReference>
<dbReference type="FunFam" id="3.30.450.60:FF:000018">
    <property type="entry name" value="AP-4 complex subunit mu-1 isoform X1"/>
    <property type="match status" value="1"/>
</dbReference>
<dbReference type="Gene3D" id="3.30.450.60">
    <property type="match status" value="1"/>
</dbReference>
<dbReference type="Gene3D" id="2.60.40.1170">
    <property type="entry name" value="Mu homology domain, subdomain B"/>
    <property type="match status" value="2"/>
</dbReference>
<dbReference type="InterPro" id="IPR050431">
    <property type="entry name" value="Adaptor_comp_med_subunit"/>
</dbReference>
<dbReference type="InterPro" id="IPR036168">
    <property type="entry name" value="AP2_Mu_C_sf"/>
</dbReference>
<dbReference type="InterPro" id="IPR022775">
    <property type="entry name" value="AP_mu_sigma_su"/>
</dbReference>
<dbReference type="InterPro" id="IPR001392">
    <property type="entry name" value="Clathrin_mu"/>
</dbReference>
<dbReference type="InterPro" id="IPR018240">
    <property type="entry name" value="Clathrin_mu_CS"/>
</dbReference>
<dbReference type="InterPro" id="IPR011012">
    <property type="entry name" value="Longin-like_dom_sf"/>
</dbReference>
<dbReference type="InterPro" id="IPR028565">
    <property type="entry name" value="MHD"/>
</dbReference>
<dbReference type="PANTHER" id="PTHR10529">
    <property type="entry name" value="AP COMPLEX SUBUNIT MU"/>
    <property type="match status" value="1"/>
</dbReference>
<dbReference type="Pfam" id="PF00928">
    <property type="entry name" value="Adap_comp_sub"/>
    <property type="match status" value="1"/>
</dbReference>
<dbReference type="Pfam" id="PF01217">
    <property type="entry name" value="Clat_adaptor_s"/>
    <property type="match status" value="1"/>
</dbReference>
<dbReference type="PIRSF" id="PIRSF005992">
    <property type="entry name" value="Clathrin_mu"/>
    <property type="match status" value="1"/>
</dbReference>
<dbReference type="PRINTS" id="PR00314">
    <property type="entry name" value="CLATHRINADPT"/>
</dbReference>
<dbReference type="SUPFAM" id="SSF49447">
    <property type="entry name" value="Second domain of Mu2 adaptin subunit (ap50) of ap2 adaptor"/>
    <property type="match status" value="1"/>
</dbReference>
<dbReference type="SUPFAM" id="SSF64356">
    <property type="entry name" value="SNARE-like"/>
    <property type="match status" value="1"/>
</dbReference>
<dbReference type="PROSITE" id="PS00991">
    <property type="entry name" value="CLAT_ADAPTOR_M_2"/>
    <property type="match status" value="1"/>
</dbReference>
<dbReference type="PROSITE" id="PS51072">
    <property type="entry name" value="MHD"/>
    <property type="match status" value="1"/>
</dbReference>
<organism>
    <name type="scientific">Rattus norvegicus</name>
    <name type="common">Rat</name>
    <dbReference type="NCBI Taxonomy" id="10116"/>
    <lineage>
        <taxon>Eukaryota</taxon>
        <taxon>Metazoa</taxon>
        <taxon>Chordata</taxon>
        <taxon>Craniata</taxon>
        <taxon>Vertebrata</taxon>
        <taxon>Euteleostomi</taxon>
        <taxon>Mammalia</taxon>
        <taxon>Eutheria</taxon>
        <taxon>Euarchontoglires</taxon>
        <taxon>Glires</taxon>
        <taxon>Rodentia</taxon>
        <taxon>Myomorpha</taxon>
        <taxon>Muroidea</taxon>
        <taxon>Muridae</taxon>
        <taxon>Murinae</taxon>
        <taxon>Rattus</taxon>
    </lineage>
</organism>